<evidence type="ECO:0000255" key="1">
    <source>
        <dbReference type="HAMAP-Rule" id="MF_01454"/>
    </source>
</evidence>
<evidence type="ECO:0000255" key="2">
    <source>
        <dbReference type="PROSITE-ProRule" id="PRU01229"/>
    </source>
</evidence>
<evidence type="ECO:0000255" key="3">
    <source>
        <dbReference type="PROSITE-ProRule" id="PRU01231"/>
    </source>
</evidence>
<evidence type="ECO:0000256" key="4">
    <source>
        <dbReference type="SAM" id="MobiDB-lite"/>
    </source>
</evidence>
<name>OBG_THET2</name>
<sequence>MFQDVLVITVAAGRGGDGAVSFRREKFVPKGGPDGGDGGRGGSVYLRARGSVDSLSRLSKRTYKAEDGEHGRGSQQHGRGGEDLVIEVPRGTRVFDADTGELLADLTEEGQTVLVARGGAGGRGNMHFVTPTRQAPRFAEAGEEGEKRRLRLELMLIADVGLVGYPNAGKSSLLAAMTRAHPKIAPYPFTTLSPNLGVVEVSEEERFTLADIPGIIEGASEGKGLGLEFLRHIARTRVLLYVLDAADEPLKTLETLRKEVGAYDPALLRRPSLVALNKVDLLEEEAVKALADALAREGLAVLPVSALTGVGLPALKEALHALVRSTPPPEMPKPVPRKEVQAGVEVVPVAEGVYEVRAPEVERYLARIKGDLMEAAGYLQEVFRRQGVEAALRAKGVRAGDLVRIGGLEFEYIPEV</sequence>
<feature type="chain" id="PRO_0000386360" description="GTPase Obg">
    <location>
        <begin position="1"/>
        <end position="416"/>
    </location>
</feature>
<feature type="domain" description="Obg" evidence="3">
    <location>
        <begin position="1"/>
        <end position="157"/>
    </location>
</feature>
<feature type="domain" description="OBG-type G" evidence="1">
    <location>
        <begin position="158"/>
        <end position="324"/>
    </location>
</feature>
<feature type="domain" description="OCT" evidence="2">
    <location>
        <begin position="336"/>
        <end position="414"/>
    </location>
</feature>
<feature type="region of interest" description="Disordered" evidence="4">
    <location>
        <begin position="25"/>
        <end position="44"/>
    </location>
</feature>
<feature type="region of interest" description="Disordered" evidence="4">
    <location>
        <begin position="62"/>
        <end position="82"/>
    </location>
</feature>
<feature type="compositionally biased region" description="Gly residues" evidence="4">
    <location>
        <begin position="32"/>
        <end position="42"/>
    </location>
</feature>
<feature type="compositionally biased region" description="Basic and acidic residues" evidence="4">
    <location>
        <begin position="63"/>
        <end position="72"/>
    </location>
</feature>
<feature type="binding site" evidence="1">
    <location>
        <begin position="164"/>
        <end position="171"/>
    </location>
    <ligand>
        <name>GTP</name>
        <dbReference type="ChEBI" id="CHEBI:37565"/>
    </ligand>
</feature>
<feature type="binding site" evidence="1">
    <location>
        <position position="171"/>
    </location>
    <ligand>
        <name>Mg(2+)</name>
        <dbReference type="ChEBI" id="CHEBI:18420"/>
    </ligand>
</feature>
<feature type="binding site" evidence="1">
    <location>
        <begin position="189"/>
        <end position="193"/>
    </location>
    <ligand>
        <name>GTP</name>
        <dbReference type="ChEBI" id="CHEBI:37565"/>
    </ligand>
</feature>
<feature type="binding site" evidence="1">
    <location>
        <position position="191"/>
    </location>
    <ligand>
        <name>Mg(2+)</name>
        <dbReference type="ChEBI" id="CHEBI:18420"/>
    </ligand>
</feature>
<feature type="binding site" evidence="1">
    <location>
        <begin position="211"/>
        <end position="214"/>
    </location>
    <ligand>
        <name>GTP</name>
        <dbReference type="ChEBI" id="CHEBI:37565"/>
    </ligand>
</feature>
<feature type="binding site" evidence="1">
    <location>
        <begin position="277"/>
        <end position="280"/>
    </location>
    <ligand>
        <name>GTP</name>
        <dbReference type="ChEBI" id="CHEBI:37565"/>
    </ligand>
</feature>
<feature type="binding site" evidence="1">
    <location>
        <begin position="305"/>
        <end position="307"/>
    </location>
    <ligand>
        <name>GTP</name>
        <dbReference type="ChEBI" id="CHEBI:37565"/>
    </ligand>
</feature>
<reference key="1">
    <citation type="journal article" date="2004" name="Nat. Biotechnol.">
        <title>The genome sequence of the extreme thermophile Thermus thermophilus.</title>
        <authorList>
            <person name="Henne A."/>
            <person name="Brueggemann H."/>
            <person name="Raasch C."/>
            <person name="Wiezer A."/>
            <person name="Hartsch T."/>
            <person name="Liesegang H."/>
            <person name="Johann A."/>
            <person name="Lienard T."/>
            <person name="Gohl O."/>
            <person name="Martinez-Arias R."/>
            <person name="Jacobi C."/>
            <person name="Starkuviene V."/>
            <person name="Schlenczeck S."/>
            <person name="Dencker S."/>
            <person name="Huber R."/>
            <person name="Klenk H.-P."/>
            <person name="Kramer W."/>
            <person name="Merkl R."/>
            <person name="Gottschalk G."/>
            <person name="Fritz H.-J."/>
        </authorList>
    </citation>
    <scope>NUCLEOTIDE SEQUENCE [LARGE SCALE GENOMIC DNA]</scope>
    <source>
        <strain>ATCC BAA-163 / DSM 7039 / HB27</strain>
    </source>
</reference>
<proteinExistence type="inferred from homology"/>
<accession>Q72HR4</accession>
<comment type="function">
    <text evidence="1">An essential GTPase which binds GTP, GDP and possibly (p)ppGpp with moderate affinity, with high nucleotide exchange rates and a fairly low GTP hydrolysis rate. Plays a role in control of the cell cycle, stress response, ribosome biogenesis and in those bacteria that undergo differentiation, in morphogenesis control.</text>
</comment>
<comment type="cofactor">
    <cofactor evidence="1">
        <name>Mg(2+)</name>
        <dbReference type="ChEBI" id="CHEBI:18420"/>
    </cofactor>
</comment>
<comment type="subunit">
    <text evidence="1">Monomer.</text>
</comment>
<comment type="subcellular location">
    <subcellularLocation>
        <location evidence="1">Cytoplasm</location>
    </subcellularLocation>
</comment>
<comment type="similarity">
    <text evidence="1">Belongs to the TRAFAC class OBG-HflX-like GTPase superfamily. OBG GTPase family.</text>
</comment>
<protein>
    <recommendedName>
        <fullName evidence="1">GTPase Obg</fullName>
        <ecNumber evidence="1">3.6.5.-</ecNumber>
    </recommendedName>
    <alternativeName>
        <fullName evidence="1">GTP-binding protein Obg</fullName>
    </alternativeName>
</protein>
<keyword id="KW-0963">Cytoplasm</keyword>
<keyword id="KW-0342">GTP-binding</keyword>
<keyword id="KW-0378">Hydrolase</keyword>
<keyword id="KW-0460">Magnesium</keyword>
<keyword id="KW-0479">Metal-binding</keyword>
<keyword id="KW-0547">Nucleotide-binding</keyword>
<organism>
    <name type="scientific">Thermus thermophilus (strain ATCC BAA-163 / DSM 7039 / HB27)</name>
    <dbReference type="NCBI Taxonomy" id="262724"/>
    <lineage>
        <taxon>Bacteria</taxon>
        <taxon>Thermotogati</taxon>
        <taxon>Deinococcota</taxon>
        <taxon>Deinococci</taxon>
        <taxon>Thermales</taxon>
        <taxon>Thermaceae</taxon>
        <taxon>Thermus</taxon>
    </lineage>
</organism>
<dbReference type="EC" id="3.6.5.-" evidence="1"/>
<dbReference type="EMBL" id="AE017221">
    <property type="protein sequence ID" value="AAS81764.1"/>
    <property type="molecule type" value="Genomic_DNA"/>
</dbReference>
<dbReference type="RefSeq" id="WP_011173802.1">
    <property type="nucleotide sequence ID" value="NC_005835.1"/>
</dbReference>
<dbReference type="SMR" id="Q72HR4"/>
<dbReference type="KEGG" id="tth:TT_C1422"/>
<dbReference type="eggNOG" id="COG0536">
    <property type="taxonomic scope" value="Bacteria"/>
</dbReference>
<dbReference type="HOGENOM" id="CLU_011747_2_1_0"/>
<dbReference type="OrthoDB" id="9807318at2"/>
<dbReference type="Proteomes" id="UP000000592">
    <property type="component" value="Chromosome"/>
</dbReference>
<dbReference type="GO" id="GO:0005737">
    <property type="term" value="C:cytoplasm"/>
    <property type="evidence" value="ECO:0007669"/>
    <property type="project" value="UniProtKB-SubCell"/>
</dbReference>
<dbReference type="GO" id="GO:0005525">
    <property type="term" value="F:GTP binding"/>
    <property type="evidence" value="ECO:0007669"/>
    <property type="project" value="UniProtKB-UniRule"/>
</dbReference>
<dbReference type="GO" id="GO:0003924">
    <property type="term" value="F:GTPase activity"/>
    <property type="evidence" value="ECO:0007669"/>
    <property type="project" value="UniProtKB-UniRule"/>
</dbReference>
<dbReference type="GO" id="GO:0000287">
    <property type="term" value="F:magnesium ion binding"/>
    <property type="evidence" value="ECO:0007669"/>
    <property type="project" value="InterPro"/>
</dbReference>
<dbReference type="GO" id="GO:0042254">
    <property type="term" value="P:ribosome biogenesis"/>
    <property type="evidence" value="ECO:0007669"/>
    <property type="project" value="UniProtKB-UniRule"/>
</dbReference>
<dbReference type="CDD" id="cd01898">
    <property type="entry name" value="Obg"/>
    <property type="match status" value="1"/>
</dbReference>
<dbReference type="FunFam" id="2.70.210.12:FF:000001">
    <property type="entry name" value="GTPase Obg"/>
    <property type="match status" value="1"/>
</dbReference>
<dbReference type="Gene3D" id="3.30.300.350">
    <property type="entry name" value="GTP-binding protein OBG, C-terminal domain"/>
    <property type="match status" value="1"/>
</dbReference>
<dbReference type="Gene3D" id="2.70.210.12">
    <property type="entry name" value="GTP1/OBG domain"/>
    <property type="match status" value="1"/>
</dbReference>
<dbReference type="Gene3D" id="3.40.50.300">
    <property type="entry name" value="P-loop containing nucleotide triphosphate hydrolases"/>
    <property type="match status" value="1"/>
</dbReference>
<dbReference type="HAMAP" id="MF_01454">
    <property type="entry name" value="GTPase_Obg"/>
    <property type="match status" value="1"/>
</dbReference>
<dbReference type="InterPro" id="IPR031167">
    <property type="entry name" value="G_OBG"/>
</dbReference>
<dbReference type="InterPro" id="IPR006073">
    <property type="entry name" value="GTP-bd"/>
</dbReference>
<dbReference type="InterPro" id="IPR014100">
    <property type="entry name" value="GTP-bd_Obg/CgtA"/>
</dbReference>
<dbReference type="InterPro" id="IPR036346">
    <property type="entry name" value="GTP-bd_prot_GTP1/OBG_C_sf"/>
</dbReference>
<dbReference type="InterPro" id="IPR006074">
    <property type="entry name" value="GTP1-OBG_CS"/>
</dbReference>
<dbReference type="InterPro" id="IPR006169">
    <property type="entry name" value="GTP1_OBG_dom"/>
</dbReference>
<dbReference type="InterPro" id="IPR036726">
    <property type="entry name" value="GTP1_OBG_dom_sf"/>
</dbReference>
<dbReference type="InterPro" id="IPR045086">
    <property type="entry name" value="OBG_GTPase"/>
</dbReference>
<dbReference type="InterPro" id="IPR015349">
    <property type="entry name" value="OCT_dom"/>
</dbReference>
<dbReference type="InterPro" id="IPR027417">
    <property type="entry name" value="P-loop_NTPase"/>
</dbReference>
<dbReference type="NCBIfam" id="TIGR02729">
    <property type="entry name" value="Obg_CgtA"/>
    <property type="match status" value="1"/>
</dbReference>
<dbReference type="NCBIfam" id="TIGR03595">
    <property type="entry name" value="Obg_CgtA_exten"/>
    <property type="match status" value="1"/>
</dbReference>
<dbReference type="NCBIfam" id="NF008954">
    <property type="entry name" value="PRK12296.1"/>
    <property type="match status" value="1"/>
</dbReference>
<dbReference type="NCBIfam" id="NF008955">
    <property type="entry name" value="PRK12297.1"/>
    <property type="match status" value="1"/>
</dbReference>
<dbReference type="NCBIfam" id="NF008956">
    <property type="entry name" value="PRK12299.1"/>
    <property type="match status" value="1"/>
</dbReference>
<dbReference type="PANTHER" id="PTHR11702">
    <property type="entry name" value="DEVELOPMENTALLY REGULATED GTP-BINDING PROTEIN-RELATED"/>
    <property type="match status" value="1"/>
</dbReference>
<dbReference type="PANTHER" id="PTHR11702:SF31">
    <property type="entry name" value="MITOCHONDRIAL RIBOSOME-ASSOCIATED GTPASE 2"/>
    <property type="match status" value="1"/>
</dbReference>
<dbReference type="Pfam" id="PF09269">
    <property type="entry name" value="DUF1967"/>
    <property type="match status" value="1"/>
</dbReference>
<dbReference type="Pfam" id="PF01018">
    <property type="entry name" value="GTP1_OBG"/>
    <property type="match status" value="1"/>
</dbReference>
<dbReference type="Pfam" id="PF01926">
    <property type="entry name" value="MMR_HSR1"/>
    <property type="match status" value="1"/>
</dbReference>
<dbReference type="PRINTS" id="PR00326">
    <property type="entry name" value="GTP1OBG"/>
</dbReference>
<dbReference type="SUPFAM" id="SSF102741">
    <property type="entry name" value="Obg GTP-binding protein C-terminal domain"/>
    <property type="match status" value="1"/>
</dbReference>
<dbReference type="SUPFAM" id="SSF82051">
    <property type="entry name" value="Obg GTP-binding protein N-terminal domain"/>
    <property type="match status" value="1"/>
</dbReference>
<dbReference type="SUPFAM" id="SSF52540">
    <property type="entry name" value="P-loop containing nucleoside triphosphate hydrolases"/>
    <property type="match status" value="1"/>
</dbReference>
<dbReference type="PROSITE" id="PS51710">
    <property type="entry name" value="G_OBG"/>
    <property type="match status" value="1"/>
</dbReference>
<dbReference type="PROSITE" id="PS00905">
    <property type="entry name" value="GTP1_OBG"/>
    <property type="match status" value="1"/>
</dbReference>
<dbReference type="PROSITE" id="PS51883">
    <property type="entry name" value="OBG"/>
    <property type="match status" value="1"/>
</dbReference>
<dbReference type="PROSITE" id="PS51881">
    <property type="entry name" value="OCT"/>
    <property type="match status" value="1"/>
</dbReference>
<gene>
    <name evidence="1" type="primary">obg</name>
    <name type="ordered locus">TT_C1422</name>
</gene>